<name>Y4136_MICAN</name>
<sequence length="959" mass="110174">MLIRHNRSSIAKPILLFLGCLVIGQLGVLVVANSLWFTEMGYLNTFLKQLSWQLGLGWGSAILSLLFIFTNLRLAQRFRWQKAKEDSYPLSPQSPSINLLGLLIIATGIGAWIGSMLLYYSKLALSLWTPDFNLPNLSSSLSSPLEIVWIRQVLTDISSNLWQGLIIAFLVLGLLIKTEYFLRIISIVFTVMLSFIIAGQWANFLKYFYGVPFNINDPQYGNDLGFYIFQLPLWQLLELWLTGVGIYTLFAVILTYLFSADSLSLGTFPGFSRPQLRHLYALWSGLMGLLVLHHIIQRYLLLYSPEGVVYGAGYIDVHVGQFIEIILGIIAGITSIWLGEKALFGKKDRRKLYKNTKKKLVFFPYLVPVFLYLIVWISGTIISGLLQRTVVQPNELVRERPYIERSIQSTRAAFSLDRIDAQVFDPQAELNAEVLERNHLTIDNIRLWDTKPLLETNRQLQQIRLYYKFPDADIDRYRVRVGLPEKIEERQISEKQQTIIAARELDYSAVPTSANTWVNKHLVYTHGYGFTLSPVNLVAAGGLPYYFVKDIGTNKDEGALQTSSELIDYSIPIGKPRIYYGELTNNYVMTPTTVEELDFPSGDGNVYNTYDGKGGILVGTGWRRWLFALYLRDWQMLFSQDFTPETRLLMRRDIQNRVQTIAPFLNYDRNPYLVAADVGDSSSKLHWIIDAYTISNRYPYSDPGKDKFNYIRNSVKVVVDAYHGTVNFYVADENDPIIQTWSKIFPHLFKSLAEMPKTLRSHIRYPEDLFSTQAERLLTYHMTDPQVFYNREDQWEIPLEIYGTEPQAVSPYYLIMKLPDSDKEEFILLHPYTPSSRQNLIAWLAARSDDREYGKLLLYQFPKQRLVYGPNQIEALINQDPDISQQISLWNRDGSKVLQGHLLIIPIEQSLLYVEPLYLVADQNSVPTIARVTVAYQNKIVMEPTLKEALEKLFSGDQS</sequence>
<accession>B0JR89</accession>
<reference key="1">
    <citation type="journal article" date="2007" name="DNA Res.">
        <title>Complete genomic structure of the bloom-forming toxic cyanobacterium Microcystis aeruginosa NIES-843.</title>
        <authorList>
            <person name="Kaneko T."/>
            <person name="Nakajima N."/>
            <person name="Okamoto S."/>
            <person name="Suzuki I."/>
            <person name="Tanabe Y."/>
            <person name="Tamaoki M."/>
            <person name="Nakamura Y."/>
            <person name="Kasai F."/>
            <person name="Watanabe A."/>
            <person name="Kawashima K."/>
            <person name="Kishida Y."/>
            <person name="Ono A."/>
            <person name="Shimizu Y."/>
            <person name="Takahashi C."/>
            <person name="Minami C."/>
            <person name="Fujishiro T."/>
            <person name="Kohara M."/>
            <person name="Katoh M."/>
            <person name="Nakazaki N."/>
            <person name="Nakayama S."/>
            <person name="Yamada M."/>
            <person name="Tabata S."/>
            <person name="Watanabe M.M."/>
        </authorList>
    </citation>
    <scope>NUCLEOTIDE SEQUENCE [LARGE SCALE GENOMIC DNA]</scope>
    <source>
        <strain>NIES-843 / IAM M-247</strain>
    </source>
</reference>
<proteinExistence type="inferred from homology"/>
<comment type="subcellular location">
    <subcellularLocation>
        <location evidence="1">Cell membrane</location>
        <topology evidence="1">Multi-pass membrane protein</topology>
    </subcellularLocation>
</comment>
<comment type="similarity">
    <text evidence="1">Belongs to the UPF0182 family.</text>
</comment>
<dbReference type="EMBL" id="AP009552">
    <property type="protein sequence ID" value="BAG03958.1"/>
    <property type="molecule type" value="Genomic_DNA"/>
</dbReference>
<dbReference type="RefSeq" id="WP_012266827.1">
    <property type="nucleotide sequence ID" value="NC_010296.1"/>
</dbReference>
<dbReference type="STRING" id="449447.MAE_41360"/>
<dbReference type="PaxDb" id="449447-MAE_41360"/>
<dbReference type="EnsemblBacteria" id="BAG03958">
    <property type="protein sequence ID" value="BAG03958"/>
    <property type="gene ID" value="MAE_41360"/>
</dbReference>
<dbReference type="KEGG" id="mar:MAE_41360"/>
<dbReference type="PATRIC" id="fig|449447.4.peg.3742"/>
<dbReference type="eggNOG" id="COG1615">
    <property type="taxonomic scope" value="Bacteria"/>
</dbReference>
<dbReference type="HOGENOM" id="CLU_007733_0_0_3"/>
<dbReference type="BioCyc" id="MAER449447:MAE_RS17920-MONOMER"/>
<dbReference type="Proteomes" id="UP000001510">
    <property type="component" value="Chromosome"/>
</dbReference>
<dbReference type="GO" id="GO:0005576">
    <property type="term" value="C:extracellular region"/>
    <property type="evidence" value="ECO:0007669"/>
    <property type="project" value="TreeGrafter"/>
</dbReference>
<dbReference type="GO" id="GO:0005886">
    <property type="term" value="C:plasma membrane"/>
    <property type="evidence" value="ECO:0007669"/>
    <property type="project" value="UniProtKB-SubCell"/>
</dbReference>
<dbReference type="HAMAP" id="MF_01600">
    <property type="entry name" value="UPF0182"/>
    <property type="match status" value="1"/>
</dbReference>
<dbReference type="InterPro" id="IPR005372">
    <property type="entry name" value="UPF0182"/>
</dbReference>
<dbReference type="NCBIfam" id="NF002707">
    <property type="entry name" value="PRK02509.1"/>
    <property type="match status" value="1"/>
</dbReference>
<dbReference type="PANTHER" id="PTHR39344">
    <property type="entry name" value="UPF0182 PROTEIN SLL1060"/>
    <property type="match status" value="1"/>
</dbReference>
<dbReference type="PANTHER" id="PTHR39344:SF1">
    <property type="entry name" value="UPF0182 PROTEIN SLL1060"/>
    <property type="match status" value="1"/>
</dbReference>
<dbReference type="Pfam" id="PF03699">
    <property type="entry name" value="UPF0182"/>
    <property type="match status" value="1"/>
</dbReference>
<evidence type="ECO:0000255" key="1">
    <source>
        <dbReference type="HAMAP-Rule" id="MF_01600"/>
    </source>
</evidence>
<keyword id="KW-1003">Cell membrane</keyword>
<keyword id="KW-0472">Membrane</keyword>
<keyword id="KW-0812">Transmembrane</keyword>
<keyword id="KW-1133">Transmembrane helix</keyword>
<organism>
    <name type="scientific">Microcystis aeruginosa (strain NIES-843 / IAM M-2473)</name>
    <dbReference type="NCBI Taxonomy" id="449447"/>
    <lineage>
        <taxon>Bacteria</taxon>
        <taxon>Bacillati</taxon>
        <taxon>Cyanobacteriota</taxon>
        <taxon>Cyanophyceae</taxon>
        <taxon>Oscillatoriophycideae</taxon>
        <taxon>Chroococcales</taxon>
        <taxon>Microcystaceae</taxon>
        <taxon>Microcystis</taxon>
    </lineage>
</organism>
<feature type="chain" id="PRO_0000335548" description="UPF0182 protein MAE_41360">
    <location>
        <begin position="1"/>
        <end position="959"/>
    </location>
</feature>
<feature type="transmembrane region" description="Helical" evidence="1">
    <location>
        <begin position="13"/>
        <end position="33"/>
    </location>
</feature>
<feature type="transmembrane region" description="Helical" evidence="1">
    <location>
        <begin position="50"/>
        <end position="70"/>
    </location>
</feature>
<feature type="transmembrane region" description="Helical" evidence="1">
    <location>
        <begin position="99"/>
        <end position="119"/>
    </location>
</feature>
<feature type="transmembrane region" description="Helical" evidence="1">
    <location>
        <begin position="156"/>
        <end position="176"/>
    </location>
</feature>
<feature type="transmembrane region" description="Helical" evidence="1">
    <location>
        <begin position="184"/>
        <end position="204"/>
    </location>
</feature>
<feature type="transmembrane region" description="Helical" evidence="1">
    <location>
        <begin position="239"/>
        <end position="259"/>
    </location>
</feature>
<feature type="transmembrane region" description="Helical" evidence="1">
    <location>
        <begin position="276"/>
        <end position="296"/>
    </location>
</feature>
<feature type="transmembrane region" description="Helical" evidence="1">
    <location>
        <begin position="319"/>
        <end position="339"/>
    </location>
</feature>
<feature type="transmembrane region" description="Helical" evidence="1">
    <location>
        <begin position="362"/>
        <end position="382"/>
    </location>
</feature>
<gene>
    <name type="ordered locus">MAE_41360</name>
</gene>
<protein>
    <recommendedName>
        <fullName evidence="1">UPF0182 protein MAE_41360</fullName>
    </recommendedName>
</protein>